<comment type="function">
    <text evidence="1">May function as a homophilic adhesion molecule.</text>
</comment>
<comment type="subcellular location">
    <subcellularLocation>
        <location evidence="1">Cell membrane</location>
        <topology evidence="1">Single-pass type I membrane protein</topology>
        <orientation evidence="1">Extracellular side</orientation>
    </subcellularLocation>
    <subcellularLocation>
        <location evidence="1">Cell junction</location>
    </subcellularLocation>
</comment>
<comment type="similarity">
    <text evidence="4">Belongs to the CD99 family.</text>
</comment>
<sequence>MAKWGSPFVFALACLALSWRVYGDDFDLYDALGDPTEKPKPKPPKPPKSPTHDSGDLDLSDFFDTPVKTTTKSPRLPPKQPDLRFSTTTKKPRTTKIPPKKSDPNDFDLSDALDGNNGKGDISDSDLDDILNDGYNPDKKKGGGGGGGGGGRATGQGDNDGSDTGFGSQAETGTIAGIASALAMALIGAVSSYISYQQKKFCFSIQEGLNAEYVKGEHMEAVVSEEPQVKYSVVESQSAIP</sequence>
<name>C99L2_XENTR</name>
<gene>
    <name type="primary">cd99l2</name>
</gene>
<dbReference type="EMBL" id="BC161386">
    <property type="protein sequence ID" value="AAI61386.1"/>
    <property type="molecule type" value="mRNA"/>
</dbReference>
<dbReference type="RefSeq" id="NP_001120500.1">
    <property type="nucleotide sequence ID" value="NM_001127028.1"/>
</dbReference>
<dbReference type="FunCoup" id="B1H3G4">
    <property type="interactions" value="486"/>
</dbReference>
<dbReference type="STRING" id="8364.ENSXETP00000041895"/>
<dbReference type="PaxDb" id="8364-ENSXETP00000024874"/>
<dbReference type="GeneID" id="100145623"/>
<dbReference type="KEGG" id="xtr:100145623"/>
<dbReference type="AGR" id="Xenbase:XB-GENE-6458996"/>
<dbReference type="CTD" id="83692"/>
<dbReference type="Xenbase" id="XB-GENE-6458996">
    <property type="gene designation" value="cd99l2"/>
</dbReference>
<dbReference type="eggNOG" id="ENOG502RZ6C">
    <property type="taxonomic scope" value="Eukaryota"/>
</dbReference>
<dbReference type="InParanoid" id="B1H3G4"/>
<dbReference type="OrthoDB" id="8961553at2759"/>
<dbReference type="Proteomes" id="UP000008143">
    <property type="component" value="Chromosome 8"/>
</dbReference>
<dbReference type="Bgee" id="ENSXETG00000011390">
    <property type="expression patterns" value="Expressed in skeletal muscle tissue and 15 other cell types or tissues"/>
</dbReference>
<dbReference type="GO" id="GO:0070161">
    <property type="term" value="C:anchoring junction"/>
    <property type="evidence" value="ECO:0007669"/>
    <property type="project" value="UniProtKB-SubCell"/>
</dbReference>
<dbReference type="GO" id="GO:0005886">
    <property type="term" value="C:plasma membrane"/>
    <property type="evidence" value="ECO:0007669"/>
    <property type="project" value="UniProtKB-SubCell"/>
</dbReference>
<dbReference type="GO" id="GO:0007155">
    <property type="term" value="P:cell adhesion"/>
    <property type="evidence" value="ECO:0007669"/>
    <property type="project" value="UniProtKB-KW"/>
</dbReference>
<dbReference type="InterPro" id="IPR022078">
    <property type="entry name" value="CD99L2"/>
</dbReference>
<dbReference type="PANTHER" id="PTHR15076:SF12">
    <property type="entry name" value="CD99 ANTIGEN-LIKE PROTEIN 2"/>
    <property type="match status" value="1"/>
</dbReference>
<dbReference type="PANTHER" id="PTHR15076">
    <property type="entry name" value="CD99/MIC2 PROTEIN RELATED"/>
    <property type="match status" value="1"/>
</dbReference>
<dbReference type="Pfam" id="PF12301">
    <property type="entry name" value="CD99L2"/>
    <property type="match status" value="1"/>
</dbReference>
<reference key="1">
    <citation type="submission" date="2008-03" db="EMBL/GenBank/DDBJ databases">
        <authorList>
            <consortium name="NIH - Xenopus Gene Collection (XGC) project"/>
        </authorList>
    </citation>
    <scope>NUCLEOTIDE SEQUENCE [LARGE SCALE MRNA]</scope>
    <source>
        <tissue>Testis</tissue>
    </source>
</reference>
<protein>
    <recommendedName>
        <fullName>CD99 antigen-like protein 2</fullName>
    </recommendedName>
    <cdAntigenName>CD99</cdAntigenName>
</protein>
<feature type="signal peptide" evidence="2">
    <location>
        <begin position="1"/>
        <end position="23"/>
    </location>
</feature>
<feature type="chain" id="PRO_0000340097" description="CD99 antigen-like protein 2">
    <location>
        <begin position="24"/>
        <end position="241"/>
    </location>
</feature>
<feature type="topological domain" description="Extracellular" evidence="2">
    <location>
        <begin position="24"/>
        <end position="173"/>
    </location>
</feature>
<feature type="transmembrane region" description="Helical" evidence="2">
    <location>
        <begin position="174"/>
        <end position="196"/>
    </location>
</feature>
<feature type="topological domain" description="Cytoplasmic" evidence="2">
    <location>
        <begin position="197"/>
        <end position="241"/>
    </location>
</feature>
<feature type="region of interest" description="Disordered" evidence="3">
    <location>
        <begin position="30"/>
        <end position="168"/>
    </location>
</feature>
<feature type="compositionally biased region" description="Gly residues" evidence="3">
    <location>
        <begin position="143"/>
        <end position="154"/>
    </location>
</feature>
<keyword id="KW-0130">Cell adhesion</keyword>
<keyword id="KW-0965">Cell junction</keyword>
<keyword id="KW-1003">Cell membrane</keyword>
<keyword id="KW-0472">Membrane</keyword>
<keyword id="KW-1185">Reference proteome</keyword>
<keyword id="KW-0732">Signal</keyword>
<keyword id="KW-0812">Transmembrane</keyword>
<keyword id="KW-1133">Transmembrane helix</keyword>
<proteinExistence type="evidence at transcript level"/>
<accession>B1H3G4</accession>
<evidence type="ECO:0000250" key="1"/>
<evidence type="ECO:0000255" key="2"/>
<evidence type="ECO:0000256" key="3">
    <source>
        <dbReference type="SAM" id="MobiDB-lite"/>
    </source>
</evidence>
<evidence type="ECO:0000305" key="4"/>
<organism>
    <name type="scientific">Xenopus tropicalis</name>
    <name type="common">Western clawed frog</name>
    <name type="synonym">Silurana tropicalis</name>
    <dbReference type="NCBI Taxonomy" id="8364"/>
    <lineage>
        <taxon>Eukaryota</taxon>
        <taxon>Metazoa</taxon>
        <taxon>Chordata</taxon>
        <taxon>Craniata</taxon>
        <taxon>Vertebrata</taxon>
        <taxon>Euteleostomi</taxon>
        <taxon>Amphibia</taxon>
        <taxon>Batrachia</taxon>
        <taxon>Anura</taxon>
        <taxon>Pipoidea</taxon>
        <taxon>Pipidae</taxon>
        <taxon>Xenopodinae</taxon>
        <taxon>Xenopus</taxon>
        <taxon>Silurana</taxon>
    </lineage>
</organism>